<organism>
    <name type="scientific">Archaeoglobus fulgidus (strain ATCC 49558 / DSM 4304 / JCM 9628 / NBRC 100126 / VC-16)</name>
    <dbReference type="NCBI Taxonomy" id="224325"/>
    <lineage>
        <taxon>Archaea</taxon>
        <taxon>Methanobacteriati</taxon>
        <taxon>Methanobacteriota</taxon>
        <taxon>Archaeoglobi</taxon>
        <taxon>Archaeoglobales</taxon>
        <taxon>Archaeoglobaceae</taxon>
        <taxon>Archaeoglobus</taxon>
    </lineage>
</organism>
<comment type="cofactor">
    <cofactor evidence="1">
        <name>pyridoxal 5'-phosphate</name>
        <dbReference type="ChEBI" id="CHEBI:597326"/>
    </cofactor>
</comment>
<comment type="similarity">
    <text evidence="2">Belongs to the class-III pyridoxal-phosphate-dependent aminotransferase family.</text>
</comment>
<feature type="chain" id="PRO_0000120540" description="Uncharacterized aminotransferase AF_1815">
    <location>
        <begin position="1"/>
        <end position="424"/>
    </location>
</feature>
<feature type="modified residue" description="N6-(pyridoxal phosphate)lysine" evidence="1">
    <location>
        <position position="259"/>
    </location>
</feature>
<accession>P56969</accession>
<dbReference type="EC" id="2.6.1.-"/>
<dbReference type="EMBL" id="AE000782">
    <property type="protein sequence ID" value="AAB89433.1"/>
    <property type="molecule type" value="Genomic_DNA"/>
</dbReference>
<dbReference type="PIR" id="F69476">
    <property type="entry name" value="F69476"/>
</dbReference>
<dbReference type="RefSeq" id="WP_010879310.1">
    <property type="nucleotide sequence ID" value="NC_000917.1"/>
</dbReference>
<dbReference type="SMR" id="P56969"/>
<dbReference type="STRING" id="224325.AF_1815"/>
<dbReference type="PaxDb" id="224325-AF_1815"/>
<dbReference type="EnsemblBacteria" id="AAB89433">
    <property type="protein sequence ID" value="AAB89433"/>
    <property type="gene ID" value="AF_1815"/>
</dbReference>
<dbReference type="GeneID" id="1485038"/>
<dbReference type="KEGG" id="afu:AF_1815"/>
<dbReference type="eggNOG" id="arCOG00914">
    <property type="taxonomic scope" value="Archaea"/>
</dbReference>
<dbReference type="HOGENOM" id="CLU_016922_10_0_2"/>
<dbReference type="OrthoDB" id="85346at2157"/>
<dbReference type="PhylomeDB" id="P56969"/>
<dbReference type="Proteomes" id="UP000002199">
    <property type="component" value="Chromosome"/>
</dbReference>
<dbReference type="GO" id="GO:0042802">
    <property type="term" value="F:identical protein binding"/>
    <property type="evidence" value="ECO:0007669"/>
    <property type="project" value="TreeGrafter"/>
</dbReference>
<dbReference type="GO" id="GO:0030170">
    <property type="term" value="F:pyridoxal phosphate binding"/>
    <property type="evidence" value="ECO:0007669"/>
    <property type="project" value="InterPro"/>
</dbReference>
<dbReference type="GO" id="GO:0008483">
    <property type="term" value="F:transaminase activity"/>
    <property type="evidence" value="ECO:0007669"/>
    <property type="project" value="UniProtKB-KW"/>
</dbReference>
<dbReference type="CDD" id="cd00610">
    <property type="entry name" value="OAT_like"/>
    <property type="match status" value="1"/>
</dbReference>
<dbReference type="FunFam" id="3.40.640.10:FF:000004">
    <property type="entry name" value="Acetylornithine aminotransferase"/>
    <property type="match status" value="1"/>
</dbReference>
<dbReference type="Gene3D" id="3.90.1150.10">
    <property type="entry name" value="Aspartate Aminotransferase, domain 1"/>
    <property type="match status" value="1"/>
</dbReference>
<dbReference type="Gene3D" id="3.40.640.10">
    <property type="entry name" value="Type I PLP-dependent aspartate aminotransferase-like (Major domain)"/>
    <property type="match status" value="1"/>
</dbReference>
<dbReference type="InterPro" id="IPR005814">
    <property type="entry name" value="Aminotrans_3"/>
</dbReference>
<dbReference type="InterPro" id="IPR049704">
    <property type="entry name" value="Aminotrans_3_PPA_site"/>
</dbReference>
<dbReference type="InterPro" id="IPR050103">
    <property type="entry name" value="Class-III_PLP-dep_AT"/>
</dbReference>
<dbReference type="InterPro" id="IPR015424">
    <property type="entry name" value="PyrdxlP-dep_Trfase"/>
</dbReference>
<dbReference type="InterPro" id="IPR015421">
    <property type="entry name" value="PyrdxlP-dep_Trfase_major"/>
</dbReference>
<dbReference type="InterPro" id="IPR015422">
    <property type="entry name" value="PyrdxlP-dep_Trfase_small"/>
</dbReference>
<dbReference type="PANTHER" id="PTHR11986:SF79">
    <property type="entry name" value="ACETYLORNITHINE AMINOTRANSFERASE, MITOCHONDRIAL"/>
    <property type="match status" value="1"/>
</dbReference>
<dbReference type="PANTHER" id="PTHR11986">
    <property type="entry name" value="AMINOTRANSFERASE CLASS III"/>
    <property type="match status" value="1"/>
</dbReference>
<dbReference type="Pfam" id="PF00202">
    <property type="entry name" value="Aminotran_3"/>
    <property type="match status" value="1"/>
</dbReference>
<dbReference type="PIRSF" id="PIRSF000521">
    <property type="entry name" value="Transaminase_4ab_Lys_Orn"/>
    <property type="match status" value="1"/>
</dbReference>
<dbReference type="SUPFAM" id="SSF53383">
    <property type="entry name" value="PLP-dependent transferases"/>
    <property type="match status" value="1"/>
</dbReference>
<dbReference type="PROSITE" id="PS00600">
    <property type="entry name" value="AA_TRANSFER_CLASS_3"/>
    <property type="match status" value="1"/>
</dbReference>
<keyword id="KW-0032">Aminotransferase</keyword>
<keyword id="KW-0663">Pyridoxal phosphate</keyword>
<keyword id="KW-1185">Reference proteome</keyword>
<keyword id="KW-0808">Transferase</keyword>
<sequence>MGFTGRRGKAEIIEAFSKHVSPYKAKFFSMVGIDFVPARREGVWYWDLDGRKLMDCHCNGGVFNLGHRHPEIVKTLVEALDELDIGNHHLISEQRARLAEKLAELMPGDISRTVFGVGGGEAIDFAIKLARGHTGRKKIIYAKGGYHGHTGFALAAGDEKYRKPFEPLAPGFVEVPFGDAEAVEKAVDDDTAAVLFETIPATLGMPLPPEDFYRRVREICDEKGCLMIMDEVQTGLGRTGKMWGIEHYKVVPDVIVTAKGLSGGVYPISATCFKEGLDDFMAENPFIHVSTFGGAELGCVVAEKVLEITSRESFLENVRKTGEALSEILGKLKDEYDFVDEIRQKGLFIGIKMVEEGWGPLLSISCYHSGILAVYANNDTSVMQFLPPLIVGEKEVDYIREKLAGAMEIASQRREMVEFIRKML</sequence>
<name>Y1815_ARCFU</name>
<reference key="1">
    <citation type="journal article" date="1997" name="Nature">
        <title>The complete genome sequence of the hyperthermophilic, sulphate-reducing archaeon Archaeoglobus fulgidus.</title>
        <authorList>
            <person name="Klenk H.-P."/>
            <person name="Clayton R.A."/>
            <person name="Tomb J.-F."/>
            <person name="White O."/>
            <person name="Nelson K.E."/>
            <person name="Ketchum K.A."/>
            <person name="Dodson R.J."/>
            <person name="Gwinn M.L."/>
            <person name="Hickey E.K."/>
            <person name="Peterson J.D."/>
            <person name="Richardson D.L."/>
            <person name="Kerlavage A.R."/>
            <person name="Graham D.E."/>
            <person name="Kyrpides N.C."/>
            <person name="Fleischmann R.D."/>
            <person name="Quackenbush J."/>
            <person name="Lee N.H."/>
            <person name="Sutton G.G."/>
            <person name="Gill S.R."/>
            <person name="Kirkness E.F."/>
            <person name="Dougherty B.A."/>
            <person name="McKenney K."/>
            <person name="Adams M.D."/>
            <person name="Loftus B.J."/>
            <person name="Peterson S.N."/>
            <person name="Reich C.I."/>
            <person name="McNeil L.K."/>
            <person name="Badger J.H."/>
            <person name="Glodek A."/>
            <person name="Zhou L."/>
            <person name="Overbeek R."/>
            <person name="Gocayne J.D."/>
            <person name="Weidman J.F."/>
            <person name="McDonald L.A."/>
            <person name="Utterback T.R."/>
            <person name="Cotton M.D."/>
            <person name="Spriggs T."/>
            <person name="Artiach P."/>
            <person name="Kaine B.P."/>
            <person name="Sykes S.M."/>
            <person name="Sadow P.W."/>
            <person name="D'Andrea K.P."/>
            <person name="Bowman C."/>
            <person name="Fujii C."/>
            <person name="Garland S.A."/>
            <person name="Mason T.M."/>
            <person name="Olsen G.J."/>
            <person name="Fraser C.M."/>
            <person name="Smith H.O."/>
            <person name="Woese C.R."/>
            <person name="Venter J.C."/>
        </authorList>
    </citation>
    <scope>NUCLEOTIDE SEQUENCE [LARGE SCALE GENOMIC DNA]</scope>
    <source>
        <strain>ATCC 49558 / DSM 4304 / JCM 9628 / NBRC 100126 / VC-16</strain>
    </source>
</reference>
<gene>
    <name type="ordered locus">AF_1815</name>
</gene>
<evidence type="ECO:0000250" key="1"/>
<evidence type="ECO:0000305" key="2"/>
<protein>
    <recommendedName>
        <fullName>Uncharacterized aminotransferase AF_1815</fullName>
        <ecNumber>2.6.1.-</ecNumber>
    </recommendedName>
</protein>
<proteinExistence type="inferred from homology"/>